<comment type="subcellular location">
    <subcellularLocation>
        <location evidence="2">Cell membrane</location>
        <topology evidence="1">Single-pass membrane protein</topology>
    </subcellularLocation>
</comment>
<comment type="similarity">
    <text evidence="2">Belongs to the MmpS family.</text>
</comment>
<accession>P0A5K3</accession>
<accession>A0A1R3XWF2</accession>
<accession>O53736</accession>
<accession>X2BEZ3</accession>
<gene>
    <name type="primary">mmpS4</name>
    <name type="ordered locus">BQ2027_MB0459C</name>
</gene>
<protein>
    <recommendedName>
        <fullName evidence="2">Probable transport accessory protein MmpS4</fullName>
    </recommendedName>
    <alternativeName>
        <fullName>PGB14T-X</fullName>
    </alternativeName>
</protein>
<evidence type="ECO:0000255" key="1"/>
<evidence type="ECO:0000305" key="2"/>
<sequence length="140" mass="15404">MLMRTWIPLVILVVVIVGGFTVHRIRGFFGSENRPSYSDTNLENSKPFNPKHLTYEIFGPPGTVADISYFDVNSEPQRVDGAVLPWSLHITTNDAAVMGNIVAQGNSDSIGCRITVDGKVRAERVSNEVNAYTYCLVKSA</sequence>
<name>MMPS4_MYCBO</name>
<keyword id="KW-1003">Cell membrane</keyword>
<keyword id="KW-0472">Membrane</keyword>
<keyword id="KW-1185">Reference proteome</keyword>
<keyword id="KW-0812">Transmembrane</keyword>
<keyword id="KW-1133">Transmembrane helix</keyword>
<feature type="chain" id="PRO_0000216156" description="Probable transport accessory protein MmpS4">
    <location>
        <begin position="1"/>
        <end position="140"/>
    </location>
</feature>
<feature type="transmembrane region" description="Helical" evidence="1">
    <location>
        <begin position="2"/>
        <end position="22"/>
    </location>
</feature>
<dbReference type="EMBL" id="LT708304">
    <property type="protein sequence ID" value="SIT99048.1"/>
    <property type="molecule type" value="Genomic_DNA"/>
</dbReference>
<dbReference type="RefSeq" id="NP_854122.1">
    <property type="nucleotide sequence ID" value="NC_002945.3"/>
</dbReference>
<dbReference type="RefSeq" id="WP_003402272.1">
    <property type="nucleotide sequence ID" value="NC_002945.4"/>
</dbReference>
<dbReference type="BMRB" id="P0A5K3"/>
<dbReference type="SMR" id="P0A5K3"/>
<dbReference type="GeneID" id="45424412"/>
<dbReference type="PATRIC" id="fig|233413.5.peg.499"/>
<dbReference type="Proteomes" id="UP000001419">
    <property type="component" value="Chromosome"/>
</dbReference>
<dbReference type="GO" id="GO:0005886">
    <property type="term" value="C:plasma membrane"/>
    <property type="evidence" value="ECO:0007669"/>
    <property type="project" value="UniProtKB-SubCell"/>
</dbReference>
<dbReference type="Gene3D" id="2.60.40.2880">
    <property type="entry name" value="MmpS1-5, C-terminal soluble domain"/>
    <property type="match status" value="1"/>
</dbReference>
<dbReference type="InterPro" id="IPR008693">
    <property type="entry name" value="MmpS"/>
</dbReference>
<dbReference type="InterPro" id="IPR038468">
    <property type="entry name" value="MmpS_C"/>
</dbReference>
<dbReference type="Pfam" id="PF05423">
    <property type="entry name" value="Mycobact_memb"/>
    <property type="match status" value="1"/>
</dbReference>
<reference key="1">
    <citation type="journal article" date="2003" name="Proc. Natl. Acad. Sci. U.S.A.">
        <title>The complete genome sequence of Mycobacterium bovis.</title>
        <authorList>
            <person name="Garnier T."/>
            <person name="Eiglmeier K."/>
            <person name="Camus J.-C."/>
            <person name="Medina N."/>
            <person name="Mansoor H."/>
            <person name="Pryor M."/>
            <person name="Duthoy S."/>
            <person name="Grondin S."/>
            <person name="Lacroix C."/>
            <person name="Monsempe C."/>
            <person name="Simon S."/>
            <person name="Harris B."/>
            <person name="Atkin R."/>
            <person name="Doggett J."/>
            <person name="Mayes R."/>
            <person name="Keating L."/>
            <person name="Wheeler P.R."/>
            <person name="Parkhill J."/>
            <person name="Barrell B.G."/>
            <person name="Cole S.T."/>
            <person name="Gordon S.V."/>
            <person name="Hewinson R.G."/>
        </authorList>
    </citation>
    <scope>NUCLEOTIDE SEQUENCE [LARGE SCALE GENOMIC DNA]</scope>
    <source>
        <strain>ATCC BAA-935 / AF2122/97</strain>
    </source>
</reference>
<reference key="2">
    <citation type="journal article" date="2017" name="Genome Announc.">
        <title>Updated reference genome sequence and annotation of Mycobacterium bovis AF2122/97.</title>
        <authorList>
            <person name="Malone K.M."/>
            <person name="Farrell D."/>
            <person name="Stuber T.P."/>
            <person name="Schubert O.T."/>
            <person name="Aebersold R."/>
            <person name="Robbe-Austerman S."/>
            <person name="Gordon S.V."/>
        </authorList>
    </citation>
    <scope>NUCLEOTIDE SEQUENCE [LARGE SCALE GENOMIC DNA]</scope>
    <scope>GENOME REANNOTATION</scope>
    <source>
        <strain>ATCC BAA-935 / AF2122/97</strain>
    </source>
</reference>
<organism>
    <name type="scientific">Mycobacterium bovis (strain ATCC BAA-935 / AF2122/97)</name>
    <dbReference type="NCBI Taxonomy" id="233413"/>
    <lineage>
        <taxon>Bacteria</taxon>
        <taxon>Bacillati</taxon>
        <taxon>Actinomycetota</taxon>
        <taxon>Actinomycetes</taxon>
        <taxon>Mycobacteriales</taxon>
        <taxon>Mycobacteriaceae</taxon>
        <taxon>Mycobacterium</taxon>
        <taxon>Mycobacterium tuberculosis complex</taxon>
    </lineage>
</organism>
<proteinExistence type="inferred from homology"/>